<protein>
    <recommendedName>
        <fullName evidence="1">Ribonuclease VapC40</fullName>
        <shortName evidence="1">RNase VapC40</shortName>
        <ecNumber evidence="1">3.1.-.-</ecNumber>
    </recommendedName>
    <alternativeName>
        <fullName evidence="1">Toxin VapC40</fullName>
    </alternativeName>
</protein>
<dbReference type="EC" id="3.1.-.-" evidence="1"/>
<dbReference type="EMBL" id="AE000516">
    <property type="protein sequence ID" value="AAK46986.1"/>
    <property type="status" value="ALT_INIT"/>
    <property type="molecule type" value="Genomic_DNA"/>
</dbReference>
<dbReference type="PIR" id="C70727">
    <property type="entry name" value="C70727"/>
</dbReference>
<dbReference type="RefSeq" id="WP_003899389.1">
    <property type="nucleotide sequence ID" value="NZ_KK341227.1"/>
</dbReference>
<dbReference type="SMR" id="P9WF60"/>
<dbReference type="KEGG" id="mtc:MT2672"/>
<dbReference type="PATRIC" id="fig|83331.31.peg.2880"/>
<dbReference type="HOGENOM" id="CLU_150004_0_0_11"/>
<dbReference type="Proteomes" id="UP000001020">
    <property type="component" value="Chromosome"/>
</dbReference>
<dbReference type="GO" id="GO:0000287">
    <property type="term" value="F:magnesium ion binding"/>
    <property type="evidence" value="ECO:0007669"/>
    <property type="project" value="UniProtKB-UniRule"/>
</dbReference>
<dbReference type="GO" id="GO:0004540">
    <property type="term" value="F:RNA nuclease activity"/>
    <property type="evidence" value="ECO:0007669"/>
    <property type="project" value="InterPro"/>
</dbReference>
<dbReference type="CDD" id="cd18681">
    <property type="entry name" value="PIN_MtVapC27-VapC40_like"/>
    <property type="match status" value="1"/>
</dbReference>
<dbReference type="Gene3D" id="3.40.50.1010">
    <property type="entry name" value="5'-nuclease"/>
    <property type="match status" value="1"/>
</dbReference>
<dbReference type="HAMAP" id="MF_00265">
    <property type="entry name" value="VapC_Nob1"/>
    <property type="match status" value="1"/>
</dbReference>
<dbReference type="InterPro" id="IPR029060">
    <property type="entry name" value="PIN-like_dom_sf"/>
</dbReference>
<dbReference type="InterPro" id="IPR002716">
    <property type="entry name" value="PIN_dom"/>
</dbReference>
<dbReference type="InterPro" id="IPR022907">
    <property type="entry name" value="VapC_family"/>
</dbReference>
<dbReference type="Pfam" id="PF01850">
    <property type="entry name" value="PIN"/>
    <property type="match status" value="1"/>
</dbReference>
<dbReference type="SUPFAM" id="SSF88723">
    <property type="entry name" value="PIN domain-like"/>
    <property type="match status" value="1"/>
</dbReference>
<keyword id="KW-0378">Hydrolase</keyword>
<keyword id="KW-0460">Magnesium</keyword>
<keyword id="KW-0479">Metal-binding</keyword>
<keyword id="KW-0540">Nuclease</keyword>
<keyword id="KW-1185">Reference proteome</keyword>
<keyword id="KW-1277">Toxin-antitoxin system</keyword>
<organism>
    <name type="scientific">Mycobacterium tuberculosis (strain CDC 1551 / Oshkosh)</name>
    <dbReference type="NCBI Taxonomy" id="83331"/>
    <lineage>
        <taxon>Bacteria</taxon>
        <taxon>Bacillati</taxon>
        <taxon>Actinomycetota</taxon>
        <taxon>Actinomycetes</taxon>
        <taxon>Mycobacteriales</taxon>
        <taxon>Mycobacteriaceae</taxon>
        <taxon>Mycobacterium</taxon>
        <taxon>Mycobacterium tuberculosis complex</taxon>
    </lineage>
</organism>
<reference key="1">
    <citation type="journal article" date="2002" name="J. Bacteriol.">
        <title>Whole-genome comparison of Mycobacterium tuberculosis clinical and laboratory strains.</title>
        <authorList>
            <person name="Fleischmann R.D."/>
            <person name="Alland D."/>
            <person name="Eisen J.A."/>
            <person name="Carpenter L."/>
            <person name="White O."/>
            <person name="Peterson J.D."/>
            <person name="DeBoy R.T."/>
            <person name="Dodson R.J."/>
            <person name="Gwinn M.L."/>
            <person name="Haft D.H."/>
            <person name="Hickey E.K."/>
            <person name="Kolonay J.F."/>
            <person name="Nelson W.C."/>
            <person name="Umayam L.A."/>
            <person name="Ermolaeva M.D."/>
            <person name="Salzberg S.L."/>
            <person name="Delcher A."/>
            <person name="Utterback T.R."/>
            <person name="Weidman J.F."/>
            <person name="Khouri H.M."/>
            <person name="Gill J."/>
            <person name="Mikula A."/>
            <person name="Bishai W."/>
            <person name="Jacobs W.R. Jr."/>
            <person name="Venter J.C."/>
            <person name="Fraser C.M."/>
        </authorList>
    </citation>
    <scope>NUCLEOTIDE SEQUENCE [LARGE SCALE GENOMIC DNA]</scope>
    <source>
        <strain>CDC 1551 / Oshkosh</strain>
    </source>
</reference>
<proteinExistence type="inferred from homology"/>
<evidence type="ECO:0000255" key="1">
    <source>
        <dbReference type="HAMAP-Rule" id="MF_00265"/>
    </source>
</evidence>
<evidence type="ECO:0000305" key="2"/>
<gene>
    <name evidence="1" type="primary">vapC40</name>
    <name type="synonym">vapC-mt25</name>
    <name type="ordered locus">MT2672</name>
</gene>
<comment type="function">
    <text evidence="1">Toxic component of a type II toxin-antitoxin (TA) system. An RNase. Its cognate antitoxin is VapB40 (By similarity).</text>
</comment>
<comment type="cofactor">
    <cofactor evidence="1">
        <name>Mg(2+)</name>
        <dbReference type="ChEBI" id="CHEBI:18420"/>
    </cofactor>
</comment>
<comment type="similarity">
    <text evidence="1">Belongs to the PINc/VapC protein family.</text>
</comment>
<comment type="caution">
    <text evidence="2">Bioinformatics programs predicts this could have a signal sequence.</text>
</comment>
<comment type="sequence caution" evidence="2">
    <conflict type="erroneous initiation">
        <sequence resource="EMBL-CDS" id="AAK46986"/>
    </conflict>
    <text>Truncated N-terminus.</text>
</comment>
<name>VPC40_MYCTO</name>
<accession>P9WF60</accession>
<accession>L0TD12</accession>
<accession>Q50625</accession>
<sequence length="134" mass="14414">MIAPDTSVLVAGFATWHEGHEAAVRALNRGVHLIAHAAVETYSVLTRLPPPHRIAPVAVHAYLADITSSNYLALDACSYRGLTDHLAEHDVTGGATYDALVGFTAKAAGAKLLTRDLRAVETYERLRVEVELVT</sequence>
<feature type="chain" id="PRO_0000428595" description="Ribonuclease VapC40">
    <location>
        <begin position="1"/>
        <end position="134"/>
    </location>
</feature>
<feature type="domain" description="PINc" evidence="1">
    <location>
        <begin position="3"/>
        <end position="126"/>
    </location>
</feature>
<feature type="binding site" evidence="1">
    <location>
        <position position="5"/>
    </location>
    <ligand>
        <name>Mg(2+)</name>
        <dbReference type="ChEBI" id="CHEBI:18420"/>
    </ligand>
</feature>
<feature type="binding site" evidence="1">
    <location>
        <position position="98"/>
    </location>
    <ligand>
        <name>Mg(2+)</name>
        <dbReference type="ChEBI" id="CHEBI:18420"/>
    </ligand>
</feature>